<protein>
    <recommendedName>
        <fullName evidence="1">Small ribosomal subunit protein eS31</fullName>
    </recommendedName>
    <alternativeName>
        <fullName evidence="2">30S ribosomal protein S27ae</fullName>
    </alternativeName>
</protein>
<comment type="cofactor">
    <cofactor evidence="1">
        <name>Zn(2+)</name>
        <dbReference type="ChEBI" id="CHEBI:29105"/>
    </cofactor>
    <text evidence="1">Binds 1 zinc ion per subunit.</text>
</comment>
<comment type="subunit">
    <text evidence="1">Part of the 30S ribosomal subunit.</text>
</comment>
<comment type="similarity">
    <text evidence="1">Belongs to the eukaryotic ribosomal protein eS31 family.</text>
</comment>
<reference key="1">
    <citation type="submission" date="2007-10" db="EMBL/GenBank/DDBJ databases">
        <title>Complete sequence of Methanococcus maripaludis C6.</title>
        <authorList>
            <consortium name="US DOE Joint Genome Institute"/>
            <person name="Copeland A."/>
            <person name="Lucas S."/>
            <person name="Lapidus A."/>
            <person name="Barry K."/>
            <person name="Glavina del Rio T."/>
            <person name="Dalin E."/>
            <person name="Tice H."/>
            <person name="Pitluck S."/>
            <person name="Clum A."/>
            <person name="Schmutz J."/>
            <person name="Larimer F."/>
            <person name="Land M."/>
            <person name="Hauser L."/>
            <person name="Kyrpides N."/>
            <person name="Mikhailova N."/>
            <person name="Sieprawska-Lupa M."/>
            <person name="Whitman W.B."/>
            <person name="Richardson P."/>
        </authorList>
    </citation>
    <scope>NUCLEOTIDE SEQUENCE [LARGE SCALE GENOMIC DNA]</scope>
    <source>
        <strain>C6 / ATCC BAA-1332</strain>
    </source>
</reference>
<gene>
    <name evidence="1" type="primary">rps27ae</name>
    <name type="ordered locus">MmarC6_0467</name>
</gene>
<evidence type="ECO:0000255" key="1">
    <source>
        <dbReference type="HAMAP-Rule" id="MF_00777"/>
    </source>
</evidence>
<evidence type="ECO:0000305" key="2"/>
<name>RS27A_METM6</name>
<keyword id="KW-0479">Metal-binding</keyword>
<keyword id="KW-0687">Ribonucleoprotein</keyword>
<keyword id="KW-0689">Ribosomal protein</keyword>
<keyword id="KW-0862">Zinc</keyword>
<keyword id="KW-0863">Zinc-finger</keyword>
<proteinExistence type="inferred from homology"/>
<feature type="chain" id="PRO_1000194302" description="Small ribosomal subunit protein eS31">
    <location>
        <begin position="1"/>
        <end position="67"/>
    </location>
</feature>
<feature type="zinc finger region" description="C4-type" evidence="1">
    <location>
        <begin position="31"/>
        <end position="52"/>
    </location>
</feature>
<feature type="binding site" evidence="1">
    <location>
        <position position="31"/>
    </location>
    <ligand>
        <name>Zn(2+)</name>
        <dbReference type="ChEBI" id="CHEBI:29105"/>
    </ligand>
</feature>
<feature type="binding site" evidence="1">
    <location>
        <position position="34"/>
    </location>
    <ligand>
        <name>Zn(2+)</name>
        <dbReference type="ChEBI" id="CHEBI:29105"/>
    </ligand>
</feature>
<feature type="binding site" evidence="1">
    <location>
        <position position="49"/>
    </location>
    <ligand>
        <name>Zn(2+)</name>
        <dbReference type="ChEBI" id="CHEBI:29105"/>
    </ligand>
</feature>
<feature type="binding site" evidence="1">
    <location>
        <position position="52"/>
    </location>
    <ligand>
        <name>Zn(2+)</name>
        <dbReference type="ChEBI" id="CHEBI:29105"/>
    </ligand>
</feature>
<sequence>MAAKKGKKTSTKKSDYYKVEGNTVERLKKVCPKCGAGVFMAEHLNRFACGKCGYLEYKKNEKAESEE</sequence>
<organism>
    <name type="scientific">Methanococcus maripaludis (strain C6 / ATCC BAA-1332)</name>
    <dbReference type="NCBI Taxonomy" id="444158"/>
    <lineage>
        <taxon>Archaea</taxon>
        <taxon>Methanobacteriati</taxon>
        <taxon>Methanobacteriota</taxon>
        <taxon>Methanomada group</taxon>
        <taxon>Methanococci</taxon>
        <taxon>Methanococcales</taxon>
        <taxon>Methanococcaceae</taxon>
        <taxon>Methanococcus</taxon>
    </lineage>
</organism>
<dbReference type="EMBL" id="CP000867">
    <property type="protein sequence ID" value="ABX01285.1"/>
    <property type="molecule type" value="Genomic_DNA"/>
</dbReference>
<dbReference type="SMR" id="A9A6I9"/>
<dbReference type="STRING" id="444158.MmarC6_0467"/>
<dbReference type="KEGG" id="mmx:MmarC6_0467"/>
<dbReference type="eggNOG" id="arCOG04183">
    <property type="taxonomic scope" value="Archaea"/>
</dbReference>
<dbReference type="HOGENOM" id="CLU_179743_2_0_2"/>
<dbReference type="OrthoDB" id="25142at2157"/>
<dbReference type="PhylomeDB" id="A9A6I9"/>
<dbReference type="GO" id="GO:1990904">
    <property type="term" value="C:ribonucleoprotein complex"/>
    <property type="evidence" value="ECO:0007669"/>
    <property type="project" value="UniProtKB-KW"/>
</dbReference>
<dbReference type="GO" id="GO:0005840">
    <property type="term" value="C:ribosome"/>
    <property type="evidence" value="ECO:0007669"/>
    <property type="project" value="UniProtKB-KW"/>
</dbReference>
<dbReference type="GO" id="GO:0003735">
    <property type="term" value="F:structural constituent of ribosome"/>
    <property type="evidence" value="ECO:0007669"/>
    <property type="project" value="InterPro"/>
</dbReference>
<dbReference type="GO" id="GO:0008270">
    <property type="term" value="F:zinc ion binding"/>
    <property type="evidence" value="ECO:0007669"/>
    <property type="project" value="UniProtKB-UniRule"/>
</dbReference>
<dbReference type="GO" id="GO:0006412">
    <property type="term" value="P:translation"/>
    <property type="evidence" value="ECO:0007669"/>
    <property type="project" value="UniProtKB-UniRule"/>
</dbReference>
<dbReference type="Gene3D" id="6.20.50.180">
    <property type="match status" value="1"/>
</dbReference>
<dbReference type="HAMAP" id="MF_00777">
    <property type="entry name" value="Ribosomal_eS31"/>
    <property type="match status" value="1"/>
</dbReference>
<dbReference type="InterPro" id="IPR002906">
    <property type="entry name" value="Ribosomal_eS31"/>
</dbReference>
<dbReference type="InterPro" id="IPR022845">
    <property type="entry name" value="Ribosomal_eS31_arc"/>
</dbReference>
<dbReference type="InterPro" id="IPR011332">
    <property type="entry name" value="Ribosomal_zn-bd"/>
</dbReference>
<dbReference type="NCBIfam" id="NF001669">
    <property type="entry name" value="PRK00432.1"/>
    <property type="match status" value="1"/>
</dbReference>
<dbReference type="Pfam" id="PF01599">
    <property type="entry name" value="Ribosomal_S27"/>
    <property type="match status" value="1"/>
</dbReference>
<dbReference type="SMART" id="SM01402">
    <property type="entry name" value="Ribosomal_S27"/>
    <property type="match status" value="1"/>
</dbReference>
<dbReference type="SUPFAM" id="SSF57829">
    <property type="entry name" value="Zn-binding ribosomal proteins"/>
    <property type="match status" value="1"/>
</dbReference>
<accession>A9A6I9</accession>